<protein>
    <recommendedName>
        <fullName>Excinuclease cho</fullName>
        <ecNumber>3.1.25.-</ecNumber>
    </recommendedName>
    <alternativeName>
        <fullName>Endonuclease cho</fullName>
    </alternativeName>
    <alternativeName>
        <fullName>UvrC homolog protein</fullName>
    </alternativeName>
</protein>
<reference key="1">
    <citation type="journal article" date="2001" name="Nature">
        <title>Genome sequence of enterohaemorrhagic Escherichia coli O157:H7.</title>
        <authorList>
            <person name="Perna N.T."/>
            <person name="Plunkett G. III"/>
            <person name="Burland V."/>
            <person name="Mau B."/>
            <person name="Glasner J.D."/>
            <person name="Rose D.J."/>
            <person name="Mayhew G.F."/>
            <person name="Evans P.S."/>
            <person name="Gregor J."/>
            <person name="Kirkpatrick H.A."/>
            <person name="Posfai G."/>
            <person name="Hackett J."/>
            <person name="Klink S."/>
            <person name="Boutin A."/>
            <person name="Shao Y."/>
            <person name="Miller L."/>
            <person name="Grotbeck E.J."/>
            <person name="Davis N.W."/>
            <person name="Lim A."/>
            <person name="Dimalanta E.T."/>
            <person name="Potamousis K."/>
            <person name="Apodaca J."/>
            <person name="Anantharaman T.S."/>
            <person name="Lin J."/>
            <person name="Yen G."/>
            <person name="Schwartz D.C."/>
            <person name="Welch R.A."/>
            <person name="Blattner F.R."/>
        </authorList>
    </citation>
    <scope>NUCLEOTIDE SEQUENCE [LARGE SCALE GENOMIC DNA]</scope>
    <source>
        <strain>O157:H7 / EDL933 / ATCC 700927 / EHEC</strain>
    </source>
</reference>
<reference key="2">
    <citation type="journal article" date="2001" name="DNA Res.">
        <title>Complete genome sequence of enterohemorrhagic Escherichia coli O157:H7 and genomic comparison with a laboratory strain K-12.</title>
        <authorList>
            <person name="Hayashi T."/>
            <person name="Makino K."/>
            <person name="Ohnishi M."/>
            <person name="Kurokawa K."/>
            <person name="Ishii K."/>
            <person name="Yokoyama K."/>
            <person name="Han C.-G."/>
            <person name="Ohtsubo E."/>
            <person name="Nakayama K."/>
            <person name="Murata T."/>
            <person name="Tanaka M."/>
            <person name="Tobe T."/>
            <person name="Iida T."/>
            <person name="Takami H."/>
            <person name="Honda T."/>
            <person name="Sasakawa C."/>
            <person name="Ogasawara N."/>
            <person name="Yasunaga T."/>
            <person name="Kuhara S."/>
            <person name="Shiba T."/>
            <person name="Hattori M."/>
            <person name="Shinagawa H."/>
        </authorList>
    </citation>
    <scope>NUCLEOTIDE SEQUENCE [LARGE SCALE GENOMIC DNA]</scope>
    <source>
        <strain>O157:H7 / Sakai / RIMD 0509952 / EHEC</strain>
    </source>
</reference>
<comment type="function">
    <text evidence="1">Incises the DNA at the 3' side of a lesion during nucleotide excision repair. Incises the DNA farther away from the lesion than UvrC. Not able to incise the 5' site of a lesion. When a lesion remains because UvrC is not able to induce the 3' incision, Cho incises the DNA. Then UvrC makes the 5' incision. The combined action of Cho and UvrC broadens the substrate range of nucleotide excision repair (By similarity).</text>
</comment>
<proteinExistence type="inferred from homology"/>
<feature type="chain" id="PRO_0000138372" description="Excinuclease cho">
    <location>
        <begin position="1"/>
        <end position="295"/>
    </location>
</feature>
<feature type="domain" description="GIY-YIG" evidence="2">
    <location>
        <begin position="33"/>
        <end position="108"/>
    </location>
</feature>
<dbReference type="EC" id="3.1.25.-"/>
<dbReference type="EMBL" id="AE005174">
    <property type="protein sequence ID" value="AAG56727.1"/>
    <property type="molecule type" value="Genomic_DNA"/>
</dbReference>
<dbReference type="EMBL" id="BA000007">
    <property type="protein sequence ID" value="BAB35870.1"/>
    <property type="molecule type" value="Genomic_DNA"/>
</dbReference>
<dbReference type="PIR" id="C85783">
    <property type="entry name" value="C85783"/>
</dbReference>
<dbReference type="PIR" id="G90934">
    <property type="entry name" value="G90934"/>
</dbReference>
<dbReference type="RefSeq" id="NP_310474.1">
    <property type="nucleotide sequence ID" value="NC_002695.1"/>
</dbReference>
<dbReference type="RefSeq" id="WP_000252388.1">
    <property type="nucleotide sequence ID" value="NZ_VOAI01000007.1"/>
</dbReference>
<dbReference type="SMR" id="Q8XDZ7"/>
<dbReference type="STRING" id="155864.Z2771"/>
<dbReference type="GeneID" id="912511"/>
<dbReference type="KEGG" id="ece:Z2771"/>
<dbReference type="KEGG" id="ecs:ECs_2447"/>
<dbReference type="PATRIC" id="fig|386585.9.peg.2561"/>
<dbReference type="eggNOG" id="COG0322">
    <property type="taxonomic scope" value="Bacteria"/>
</dbReference>
<dbReference type="HOGENOM" id="CLU_054721_1_0_6"/>
<dbReference type="OMA" id="RVMSHFR"/>
<dbReference type="Proteomes" id="UP000000558">
    <property type="component" value="Chromosome"/>
</dbReference>
<dbReference type="Proteomes" id="UP000002519">
    <property type="component" value="Chromosome"/>
</dbReference>
<dbReference type="GO" id="GO:0009380">
    <property type="term" value="C:excinuclease repair complex"/>
    <property type="evidence" value="ECO:0007669"/>
    <property type="project" value="TreeGrafter"/>
</dbReference>
<dbReference type="GO" id="GO:0004518">
    <property type="term" value="F:nuclease activity"/>
    <property type="evidence" value="ECO:0007669"/>
    <property type="project" value="UniProtKB-KW"/>
</dbReference>
<dbReference type="GO" id="GO:0006289">
    <property type="term" value="P:nucleotide-excision repair"/>
    <property type="evidence" value="ECO:0007669"/>
    <property type="project" value="InterPro"/>
</dbReference>
<dbReference type="GO" id="GO:0009432">
    <property type="term" value="P:SOS response"/>
    <property type="evidence" value="ECO:0007669"/>
    <property type="project" value="UniProtKB-KW"/>
</dbReference>
<dbReference type="CDD" id="cd10434">
    <property type="entry name" value="GIY-YIG_UvrC_Cho"/>
    <property type="match status" value="1"/>
</dbReference>
<dbReference type="FunFam" id="3.40.1440.10:FF:000004">
    <property type="entry name" value="UV-repair endonuclease Cho"/>
    <property type="match status" value="1"/>
</dbReference>
<dbReference type="Gene3D" id="3.40.1440.10">
    <property type="entry name" value="GIY-YIG endonuclease"/>
    <property type="match status" value="1"/>
</dbReference>
<dbReference type="InterPro" id="IPR000305">
    <property type="entry name" value="GIY-YIG_endonuc"/>
</dbReference>
<dbReference type="InterPro" id="IPR035901">
    <property type="entry name" value="GIY-YIG_endonuc_sf"/>
</dbReference>
<dbReference type="InterPro" id="IPR047296">
    <property type="entry name" value="GIY-YIG_UvrC_Cho"/>
</dbReference>
<dbReference type="InterPro" id="IPR050066">
    <property type="entry name" value="UvrABC_protein_C"/>
</dbReference>
<dbReference type="NCBIfam" id="NF007833">
    <property type="entry name" value="PRK10545.1"/>
    <property type="match status" value="1"/>
</dbReference>
<dbReference type="PANTHER" id="PTHR30562:SF10">
    <property type="entry name" value="EXCINUCLEASE CHO"/>
    <property type="match status" value="1"/>
</dbReference>
<dbReference type="PANTHER" id="PTHR30562">
    <property type="entry name" value="UVRC/OXIDOREDUCTASE"/>
    <property type="match status" value="1"/>
</dbReference>
<dbReference type="SMART" id="SM00465">
    <property type="entry name" value="GIYc"/>
    <property type="match status" value="1"/>
</dbReference>
<dbReference type="SUPFAM" id="SSF82771">
    <property type="entry name" value="GIY-YIG endonuclease"/>
    <property type="match status" value="1"/>
</dbReference>
<dbReference type="PROSITE" id="PS50164">
    <property type="entry name" value="GIY_YIG"/>
    <property type="match status" value="1"/>
</dbReference>
<evidence type="ECO:0000250" key="1"/>
<evidence type="ECO:0000255" key="2">
    <source>
        <dbReference type="PROSITE-ProRule" id="PRU00977"/>
    </source>
</evidence>
<organism>
    <name type="scientific">Escherichia coli O157:H7</name>
    <dbReference type="NCBI Taxonomy" id="83334"/>
    <lineage>
        <taxon>Bacteria</taxon>
        <taxon>Pseudomonadati</taxon>
        <taxon>Pseudomonadota</taxon>
        <taxon>Gammaproteobacteria</taxon>
        <taxon>Enterobacterales</taxon>
        <taxon>Enterobacteriaceae</taxon>
        <taxon>Escherichia</taxon>
    </lineage>
</organism>
<sequence length="295" mass="33725">MVRRLTSPRLEFEAAAIYEYPEHLRSFLNDLPTRPGVYLFHGESDTMPLYIGKSVNIRSRVLSHLRTPDEAAMLRQSRRISWICTAGEIGALLLEARLIKEQQPLFNKRLRRNRQLCALQLNEKRVDVVYAKEVDFSRAPNLFGLFANRRAALQALQSIADEQKLCYGLLGLEPLSRGRACFRSALKRCAGACCGKESHEEHALRLRQSLERLRVVCWPWQGAVALKEQHPEMTQYHIIQNWLWLGAVNSLEEATTLIRTPAGFDHDGYKILCKPLLSGNYEITELDPANDQRAS</sequence>
<name>CHO_ECO57</name>
<accession>Q8XDZ7</accession>
<keyword id="KW-0227">DNA damage</keyword>
<keyword id="KW-0228">DNA excision</keyword>
<keyword id="KW-0234">DNA repair</keyword>
<keyword id="KW-0267">Excision nuclease</keyword>
<keyword id="KW-0378">Hydrolase</keyword>
<keyword id="KW-1185">Reference proteome</keyword>
<keyword id="KW-0742">SOS response</keyword>
<gene>
    <name type="primary">cho</name>
    <name type="ordered locus">Z2771</name>
    <name type="ordered locus">ECs2447</name>
</gene>